<feature type="chain" id="PRO_0000057626" description="Hydroxymethylglutaryl-CoA synthase">
    <location>
        <begin position="1"/>
        <end position="348"/>
    </location>
</feature>
<feature type="active site" description="Proton donor/acceptor" evidence="1">
    <location>
        <position position="80"/>
    </location>
</feature>
<feature type="active site" description="Acyl-thioester intermediate" evidence="1">
    <location>
        <position position="112"/>
    </location>
</feature>
<feature type="active site" description="Proton donor/acceptor" evidence="1">
    <location>
        <position position="235"/>
    </location>
</feature>
<feature type="binding site" evidence="1">
    <location>
        <position position="29"/>
    </location>
    <ligand>
        <name>(3S)-3-hydroxy-3-methylglutaryl-CoA</name>
        <dbReference type="ChEBI" id="CHEBI:43074"/>
    </ligand>
</feature>
<feature type="binding site" evidence="1">
    <location>
        <position position="112"/>
    </location>
    <ligand>
        <name>(3S)-3-hydroxy-3-methylglutaryl-CoA</name>
        <dbReference type="ChEBI" id="CHEBI:43074"/>
    </ligand>
</feature>
<feature type="binding site" evidence="1">
    <location>
        <position position="153"/>
    </location>
    <ligand>
        <name>(3S)-3-hydroxy-3-methylglutaryl-CoA</name>
        <dbReference type="ChEBI" id="CHEBI:43074"/>
    </ligand>
</feature>
<feature type="binding site" evidence="1">
    <location>
        <position position="202"/>
    </location>
    <ligand>
        <name>(3S)-3-hydroxy-3-methylglutaryl-CoA</name>
        <dbReference type="ChEBI" id="CHEBI:43074"/>
    </ligand>
</feature>
<feature type="binding site" evidence="1">
    <location>
        <position position="235"/>
    </location>
    <ligand>
        <name>(3S)-3-hydroxy-3-methylglutaryl-CoA</name>
        <dbReference type="ChEBI" id="CHEBI:43074"/>
    </ligand>
</feature>
<feature type="binding site" evidence="1">
    <location>
        <position position="240"/>
    </location>
    <ligand>
        <name>CoA</name>
        <dbReference type="ChEBI" id="CHEBI:57287"/>
        <note>ligand shared with acetoacetyl-CoA thiolase</note>
    </ligand>
</feature>
<feature type="binding site" evidence="1">
    <location>
        <position position="267"/>
    </location>
    <ligand>
        <name>(3S)-3-hydroxy-3-methylglutaryl-CoA</name>
        <dbReference type="ChEBI" id="CHEBI:43074"/>
    </ligand>
</feature>
<feature type="binding site" evidence="1">
    <location>
        <position position="297"/>
    </location>
    <ligand>
        <name>(3S)-3-hydroxy-3-methylglutaryl-CoA</name>
        <dbReference type="ChEBI" id="CHEBI:43074"/>
    </ligand>
</feature>
<gene>
    <name type="ordered locus">STK_13490</name>
</gene>
<keyword id="KW-0012">Acyltransferase</keyword>
<keyword id="KW-0414">Isoprene biosynthesis</keyword>
<keyword id="KW-1185">Reference proteome</keyword>
<keyword id="KW-0808">Transferase</keyword>
<evidence type="ECO:0000255" key="1">
    <source>
        <dbReference type="HAMAP-Rule" id="MF_01409"/>
    </source>
</evidence>
<name>HMGCS_SULTO</name>
<comment type="function">
    <text evidence="1">Catalyzes the condensation of acetyl-CoA with acetoacetyl-CoA to form 3-hydroxy-3-methylglutaryl-CoA (HMG-CoA). Functions in the mevalonate (MVA) pathway leading to isopentenyl diphosphate (IPP), a key precursor for the biosynthesis of isoprenoid compounds that are building blocks of archaeal membrane lipids.</text>
</comment>
<comment type="catalytic activity">
    <reaction evidence="1">
        <text>acetoacetyl-CoA + acetyl-CoA + H2O = (3S)-3-hydroxy-3-methylglutaryl-CoA + CoA + H(+)</text>
        <dbReference type="Rhea" id="RHEA:10188"/>
        <dbReference type="ChEBI" id="CHEBI:15377"/>
        <dbReference type="ChEBI" id="CHEBI:15378"/>
        <dbReference type="ChEBI" id="CHEBI:43074"/>
        <dbReference type="ChEBI" id="CHEBI:57286"/>
        <dbReference type="ChEBI" id="CHEBI:57287"/>
        <dbReference type="ChEBI" id="CHEBI:57288"/>
        <dbReference type="EC" id="2.3.3.10"/>
    </reaction>
    <physiologicalReaction direction="left-to-right" evidence="1">
        <dbReference type="Rhea" id="RHEA:10189"/>
    </physiologicalReaction>
</comment>
<comment type="pathway">
    <text evidence="1">Metabolic intermediate biosynthesis; (R)-mevalonate biosynthesis; (R)-mevalonate from acetyl-CoA: step 2/3.</text>
</comment>
<comment type="subunit">
    <text evidence="1">Interacts with acetoacetyl-CoA thiolase that catalyzes the precedent step in the pathway and with a DUF35 protein. The acetoacetyl-CoA thiolase/HMG-CoA synthase complex channels the intermediate via a fused CoA-binding site, which allows for efficient coupling of the endergonic thiolase reaction with the exergonic HMGCS reaction.</text>
</comment>
<comment type="similarity">
    <text evidence="1">Belongs to the thiolase-like superfamily. Archaeal HMG-CoA synthase family.</text>
</comment>
<dbReference type="EC" id="2.3.3.10" evidence="1"/>
<dbReference type="EMBL" id="BA000023">
    <property type="protein sequence ID" value="BAK54536.1"/>
    <property type="molecule type" value="Genomic_DNA"/>
</dbReference>
<dbReference type="RefSeq" id="WP_010979390.1">
    <property type="nucleotide sequence ID" value="NC_003106.2"/>
</dbReference>
<dbReference type="SMR" id="Q971K8"/>
<dbReference type="STRING" id="273063.STK_13490"/>
<dbReference type="GeneID" id="1459372"/>
<dbReference type="KEGG" id="sto:STK_13490"/>
<dbReference type="PATRIC" id="fig|273063.9.peg.1544"/>
<dbReference type="eggNOG" id="arCOG01767">
    <property type="taxonomic scope" value="Archaea"/>
</dbReference>
<dbReference type="OrthoDB" id="5812at2157"/>
<dbReference type="UniPathway" id="UPA00058">
    <property type="reaction ID" value="UER00102"/>
</dbReference>
<dbReference type="Proteomes" id="UP000001015">
    <property type="component" value="Chromosome"/>
</dbReference>
<dbReference type="GO" id="GO:0003985">
    <property type="term" value="F:acetyl-CoA C-acetyltransferase activity"/>
    <property type="evidence" value="ECO:0007669"/>
    <property type="project" value="UniProtKB-UniRule"/>
</dbReference>
<dbReference type="GO" id="GO:0004421">
    <property type="term" value="F:hydroxymethylglutaryl-CoA synthase activity"/>
    <property type="evidence" value="ECO:0007669"/>
    <property type="project" value="InterPro"/>
</dbReference>
<dbReference type="GO" id="GO:0010142">
    <property type="term" value="P:farnesyl diphosphate biosynthetic process, mevalonate pathway"/>
    <property type="evidence" value="ECO:0007669"/>
    <property type="project" value="TreeGrafter"/>
</dbReference>
<dbReference type="GO" id="GO:0019287">
    <property type="term" value="P:isopentenyl diphosphate biosynthetic process, mevalonate pathway"/>
    <property type="evidence" value="ECO:0007669"/>
    <property type="project" value="UniProtKB-UniRule"/>
</dbReference>
<dbReference type="CDD" id="cd00827">
    <property type="entry name" value="init_cond_enzymes"/>
    <property type="match status" value="1"/>
</dbReference>
<dbReference type="FunFam" id="3.40.47.10:FF:000046">
    <property type="entry name" value="UPF0219 protein M1627_1703"/>
    <property type="match status" value="1"/>
</dbReference>
<dbReference type="Gene3D" id="3.40.47.10">
    <property type="match status" value="1"/>
</dbReference>
<dbReference type="HAMAP" id="MF_01409">
    <property type="entry name" value="HMG_CoA_synth_arch"/>
    <property type="match status" value="1"/>
</dbReference>
<dbReference type="InterPro" id="IPR013747">
    <property type="entry name" value="ACP_syn_III_C"/>
</dbReference>
<dbReference type="InterPro" id="IPR004656">
    <property type="entry name" value="HMG_CoA_Synthase"/>
</dbReference>
<dbReference type="InterPro" id="IPR016039">
    <property type="entry name" value="Thiolase-like"/>
</dbReference>
<dbReference type="NCBIfam" id="TIGR00748">
    <property type="entry name" value="HMG_CoA_syn_Arc"/>
    <property type="match status" value="1"/>
</dbReference>
<dbReference type="NCBIfam" id="NF003274">
    <property type="entry name" value="PRK04262.1"/>
    <property type="match status" value="1"/>
</dbReference>
<dbReference type="PANTHER" id="PTHR43323">
    <property type="entry name" value="3-HYDROXY-3-METHYLGLUTARYL COENZYME A SYNTHASE"/>
    <property type="match status" value="1"/>
</dbReference>
<dbReference type="PANTHER" id="PTHR43323:SF2">
    <property type="entry name" value="HYDROXYMETHYLGLUTARYL-COA SYNTHASE"/>
    <property type="match status" value="1"/>
</dbReference>
<dbReference type="Pfam" id="PF08541">
    <property type="entry name" value="ACP_syn_III_C"/>
    <property type="match status" value="1"/>
</dbReference>
<dbReference type="SUPFAM" id="SSF53901">
    <property type="entry name" value="Thiolase-like"/>
    <property type="match status" value="2"/>
</dbReference>
<protein>
    <recommendedName>
        <fullName evidence="1">Hydroxymethylglutaryl-CoA synthase</fullName>
        <shortName evidence="1">HMG-CoA synthase</shortName>
        <shortName evidence="1">HMGCS</shortName>
        <ecNumber evidence="1">2.3.3.10</ecNumber>
    </recommendedName>
</protein>
<sequence>MSSGIVGWGAYVPRYRLNVLEIAKLWGYDEGVVKSLGLMEKAVPSHDEDSTTMAWEAARNALMRAKIDPSEIKAVLFGSESKVYAVKPTSTIIIDSLGISHETLSADLEFACRAASVGLRLLSGMVEANRIKYGLVIGSDVAQSNPGDVLELSSAAASVAYIVGPADESSAIIEYATSYTTDMPDFWRRDGMPYPLHGEAFTGEPAYFAHIISAVQLLLKEGGYSISDFDYFVFHQPNGKFPLQVAKKLGVPLEKVKEGLVSPYIGNPYNASALLGLAKVLDIAKPGQRILVAPFGSGAGSDAFSILVTDKIEERQKLAPRVEDYINNKKVISYSVYAKTTNKYKVYE</sequence>
<proteinExistence type="inferred from homology"/>
<accession>Q971K8</accession>
<accession>F9VP28</accession>
<reference key="1">
    <citation type="journal article" date="2001" name="DNA Res.">
        <title>Complete genome sequence of an aerobic thermoacidophilic Crenarchaeon, Sulfolobus tokodaii strain7.</title>
        <authorList>
            <person name="Kawarabayasi Y."/>
            <person name="Hino Y."/>
            <person name="Horikawa H."/>
            <person name="Jin-no K."/>
            <person name="Takahashi M."/>
            <person name="Sekine M."/>
            <person name="Baba S."/>
            <person name="Ankai A."/>
            <person name="Kosugi H."/>
            <person name="Hosoyama A."/>
            <person name="Fukui S."/>
            <person name="Nagai Y."/>
            <person name="Nishijima K."/>
            <person name="Otsuka R."/>
            <person name="Nakazawa H."/>
            <person name="Takamiya M."/>
            <person name="Kato Y."/>
            <person name="Yoshizawa T."/>
            <person name="Tanaka T."/>
            <person name="Kudoh Y."/>
            <person name="Yamazaki J."/>
            <person name="Kushida N."/>
            <person name="Oguchi A."/>
            <person name="Aoki K."/>
            <person name="Masuda S."/>
            <person name="Yanagii M."/>
            <person name="Nishimura M."/>
            <person name="Yamagishi A."/>
            <person name="Oshima T."/>
            <person name="Kikuchi H."/>
        </authorList>
    </citation>
    <scope>NUCLEOTIDE SEQUENCE [LARGE SCALE GENOMIC DNA]</scope>
    <source>
        <strain>DSM 16993 / JCM 10545 / NBRC 100140 / 7</strain>
    </source>
</reference>
<organism>
    <name type="scientific">Sulfurisphaera tokodaii (strain DSM 16993 / JCM 10545 / NBRC 100140 / 7)</name>
    <name type="common">Sulfolobus tokodaii</name>
    <dbReference type="NCBI Taxonomy" id="273063"/>
    <lineage>
        <taxon>Archaea</taxon>
        <taxon>Thermoproteota</taxon>
        <taxon>Thermoprotei</taxon>
        <taxon>Sulfolobales</taxon>
        <taxon>Sulfolobaceae</taxon>
        <taxon>Sulfurisphaera</taxon>
    </lineage>
</organism>